<gene>
    <name evidence="1" type="primary">yafD</name>
    <name type="ordered locus">ECDH10B_0190</name>
</gene>
<protein>
    <recommendedName>
        <fullName evidence="1">UPF0294 protein YafD</fullName>
    </recommendedName>
</protein>
<dbReference type="EMBL" id="CP000948">
    <property type="protein sequence ID" value="ACB01382.1"/>
    <property type="molecule type" value="Genomic_DNA"/>
</dbReference>
<dbReference type="RefSeq" id="WP_001230983.1">
    <property type="nucleotide sequence ID" value="NC_010473.1"/>
</dbReference>
<dbReference type="SMR" id="B1XD73"/>
<dbReference type="KEGG" id="ecd:ECDH10B_0190"/>
<dbReference type="HOGENOM" id="CLU_083563_0_0_6"/>
<dbReference type="GO" id="GO:0005737">
    <property type="term" value="C:cytoplasm"/>
    <property type="evidence" value="ECO:0007669"/>
    <property type="project" value="UniProtKB-SubCell"/>
</dbReference>
<dbReference type="GO" id="GO:0003824">
    <property type="term" value="F:catalytic activity"/>
    <property type="evidence" value="ECO:0007669"/>
    <property type="project" value="InterPro"/>
</dbReference>
<dbReference type="Gene3D" id="3.60.10.10">
    <property type="entry name" value="Endonuclease/exonuclease/phosphatase"/>
    <property type="match status" value="1"/>
</dbReference>
<dbReference type="HAMAP" id="MF_01119">
    <property type="entry name" value="UPF0294"/>
    <property type="match status" value="1"/>
</dbReference>
<dbReference type="InterPro" id="IPR036691">
    <property type="entry name" value="Endo/exonu/phosph_ase_sf"/>
</dbReference>
<dbReference type="InterPro" id="IPR005135">
    <property type="entry name" value="Endo/exonuclease/phosphatase"/>
</dbReference>
<dbReference type="InterPro" id="IPR022958">
    <property type="entry name" value="UPF0294"/>
</dbReference>
<dbReference type="NCBIfam" id="NF003839">
    <property type="entry name" value="PRK05421.1-1"/>
    <property type="match status" value="1"/>
</dbReference>
<dbReference type="NCBIfam" id="NF003840">
    <property type="entry name" value="PRK05421.1-2"/>
    <property type="match status" value="1"/>
</dbReference>
<dbReference type="NCBIfam" id="NF003841">
    <property type="entry name" value="PRK05421.1-3"/>
    <property type="match status" value="1"/>
</dbReference>
<dbReference type="NCBIfam" id="NF003842">
    <property type="entry name" value="PRK05421.1-4"/>
    <property type="match status" value="1"/>
</dbReference>
<dbReference type="Pfam" id="PF03372">
    <property type="entry name" value="Exo_endo_phos"/>
    <property type="match status" value="1"/>
</dbReference>
<dbReference type="SUPFAM" id="SSF56219">
    <property type="entry name" value="DNase I-like"/>
    <property type="match status" value="1"/>
</dbReference>
<keyword id="KW-0963">Cytoplasm</keyword>
<reference key="1">
    <citation type="journal article" date="2008" name="J. Bacteriol.">
        <title>The complete genome sequence of Escherichia coli DH10B: insights into the biology of a laboratory workhorse.</title>
        <authorList>
            <person name="Durfee T."/>
            <person name="Nelson R."/>
            <person name="Baldwin S."/>
            <person name="Plunkett G. III"/>
            <person name="Burland V."/>
            <person name="Mau B."/>
            <person name="Petrosino J.F."/>
            <person name="Qin X."/>
            <person name="Muzny D.M."/>
            <person name="Ayele M."/>
            <person name="Gibbs R.A."/>
            <person name="Csorgo B."/>
            <person name="Posfai G."/>
            <person name="Weinstock G.M."/>
            <person name="Blattner F.R."/>
        </authorList>
    </citation>
    <scope>NUCLEOTIDE SEQUENCE [LARGE SCALE GENOMIC DNA]</scope>
    <source>
        <strain>K12 / DH10B</strain>
    </source>
</reference>
<proteinExistence type="inferred from homology"/>
<accession>B1XD73</accession>
<feature type="chain" id="PRO_1000137241" description="UPF0294 protein YafD">
    <location>
        <begin position="1"/>
        <end position="266"/>
    </location>
</feature>
<name>YAFD_ECODH</name>
<evidence type="ECO:0000255" key="1">
    <source>
        <dbReference type="HAMAP-Rule" id="MF_01119"/>
    </source>
</evidence>
<sequence length="266" mass="29992">MRKNTYAMRYVAGQPAERILPPGSFASIGQALPPGEPLSTEERIRILVWNIYKQQRAEWLSVLKNYGKDAHLVLLQEAQTTPELVQFATANYLAADQVPAFVLPQHPSGVMTLSAAHPVYCCPLREREPILRLAKSALVTVYPLPDTRLLMVVNIHAVNFSLGVDVYSKQLLPIGDQIAHHSGPVIMAGDFNAWSRRRMNALYRFAREMSLRQVRFTDDQRRRAFGRPLDFVFYRGLNVSEASVLVTRASDHNPLLVEFSPGKPDK</sequence>
<organism>
    <name type="scientific">Escherichia coli (strain K12 / DH10B)</name>
    <dbReference type="NCBI Taxonomy" id="316385"/>
    <lineage>
        <taxon>Bacteria</taxon>
        <taxon>Pseudomonadati</taxon>
        <taxon>Pseudomonadota</taxon>
        <taxon>Gammaproteobacteria</taxon>
        <taxon>Enterobacterales</taxon>
        <taxon>Enterobacteriaceae</taxon>
        <taxon>Escherichia</taxon>
    </lineage>
</organism>
<comment type="subcellular location">
    <subcellularLocation>
        <location evidence="1">Cytoplasm</location>
    </subcellularLocation>
</comment>
<comment type="similarity">
    <text evidence="1">Belongs to the UPF0294 family.</text>
</comment>